<keyword id="KW-1064">Adaptive immunity</keyword>
<keyword id="KW-1003">Cell membrane</keyword>
<keyword id="KW-0903">Direct protein sequencing</keyword>
<keyword id="KW-1015">Disulfide bond</keyword>
<keyword id="KW-0391">Immunity</keyword>
<keyword id="KW-1280">Immunoglobulin</keyword>
<keyword id="KW-0393">Immunoglobulin domain</keyword>
<keyword id="KW-0472">Membrane</keyword>
<keyword id="KW-1267">Proteomics identification</keyword>
<keyword id="KW-1185">Reference proteome</keyword>
<keyword id="KW-0964">Secreted</keyword>
<keyword id="KW-0732">Signal</keyword>
<proteinExistence type="evidence at protein level"/>
<reference key="1">
    <citation type="journal article" date="1999" name="Nature">
        <title>The DNA sequence of human chromosome 22.</title>
        <authorList>
            <person name="Dunham I."/>
            <person name="Hunt A.R."/>
            <person name="Collins J.E."/>
            <person name="Bruskiewich R."/>
            <person name="Beare D.M."/>
            <person name="Clamp M."/>
            <person name="Smink L.J."/>
            <person name="Ainscough R."/>
            <person name="Almeida J.P."/>
            <person name="Babbage A.K."/>
            <person name="Bagguley C."/>
            <person name="Bailey J."/>
            <person name="Barlow K.F."/>
            <person name="Bates K.N."/>
            <person name="Beasley O.P."/>
            <person name="Bird C.P."/>
            <person name="Blakey S.E."/>
            <person name="Bridgeman A.M."/>
            <person name="Buck D."/>
            <person name="Burgess J."/>
            <person name="Burrill W.D."/>
            <person name="Burton J."/>
            <person name="Carder C."/>
            <person name="Carter N.P."/>
            <person name="Chen Y."/>
            <person name="Clark G."/>
            <person name="Clegg S.M."/>
            <person name="Cobley V.E."/>
            <person name="Cole C.G."/>
            <person name="Collier R.E."/>
            <person name="Connor R."/>
            <person name="Conroy D."/>
            <person name="Corby N.R."/>
            <person name="Coville G.J."/>
            <person name="Cox A.V."/>
            <person name="Davis J."/>
            <person name="Dawson E."/>
            <person name="Dhami P.D."/>
            <person name="Dockree C."/>
            <person name="Dodsworth S.J."/>
            <person name="Durbin R.M."/>
            <person name="Ellington A.G."/>
            <person name="Evans K.L."/>
            <person name="Fey J.M."/>
            <person name="Fleming K."/>
            <person name="French L."/>
            <person name="Garner A.A."/>
            <person name="Gilbert J.G.R."/>
            <person name="Goward M.E."/>
            <person name="Grafham D.V."/>
            <person name="Griffiths M.N.D."/>
            <person name="Hall C."/>
            <person name="Hall R.E."/>
            <person name="Hall-Tamlyn G."/>
            <person name="Heathcott R.W."/>
            <person name="Ho S."/>
            <person name="Holmes S."/>
            <person name="Hunt S.E."/>
            <person name="Jones M.C."/>
            <person name="Kershaw J."/>
            <person name="Kimberley A.M."/>
            <person name="King A."/>
            <person name="Laird G.K."/>
            <person name="Langford C.F."/>
            <person name="Leversha M.A."/>
            <person name="Lloyd C."/>
            <person name="Lloyd D.M."/>
            <person name="Martyn I.D."/>
            <person name="Mashreghi-Mohammadi M."/>
            <person name="Matthews L.H."/>
            <person name="Mccann O.T."/>
            <person name="Mcclay J."/>
            <person name="Mclaren S."/>
            <person name="McMurray A.A."/>
            <person name="Milne S.A."/>
            <person name="Mortimore B.J."/>
            <person name="Odell C.N."/>
            <person name="Pavitt R."/>
            <person name="Pearce A.V."/>
            <person name="Pearson D."/>
            <person name="Phillimore B.J.C.T."/>
            <person name="Phillips S.H."/>
            <person name="Plumb R.W."/>
            <person name="Ramsay H."/>
            <person name="Ramsey Y."/>
            <person name="Rogers L."/>
            <person name="Ross M.T."/>
            <person name="Scott C.E."/>
            <person name="Sehra H.K."/>
            <person name="Skuce C.D."/>
            <person name="Smalley S."/>
            <person name="Smith M.L."/>
            <person name="Soderlund C."/>
            <person name="Spragon L."/>
            <person name="Steward C.A."/>
            <person name="Sulston J.E."/>
            <person name="Swann R.M."/>
            <person name="Vaudin M."/>
            <person name="Wall M."/>
            <person name="Wallis J.M."/>
            <person name="Whiteley M.N."/>
            <person name="Willey D.L."/>
            <person name="Williams L."/>
            <person name="Williams S.A."/>
            <person name="Williamson H."/>
            <person name="Wilmer T.E."/>
            <person name="Wilming L."/>
            <person name="Wright C.L."/>
            <person name="Hubbard T."/>
            <person name="Bentley D.R."/>
            <person name="Beck S."/>
            <person name="Rogers J."/>
            <person name="Shimizu N."/>
            <person name="Minoshima S."/>
            <person name="Kawasaki K."/>
            <person name="Sasaki T."/>
            <person name="Asakawa S."/>
            <person name="Kudoh J."/>
            <person name="Shintani A."/>
            <person name="Shibuya K."/>
            <person name="Yoshizaki Y."/>
            <person name="Aoki N."/>
            <person name="Mitsuyama S."/>
            <person name="Roe B.A."/>
            <person name="Chen F."/>
            <person name="Chu L."/>
            <person name="Crabtree J."/>
            <person name="Deschamps S."/>
            <person name="Do A."/>
            <person name="Do T."/>
            <person name="Dorman A."/>
            <person name="Fang F."/>
            <person name="Fu Y."/>
            <person name="Hu P."/>
            <person name="Hua A."/>
            <person name="Kenton S."/>
            <person name="Lai H."/>
            <person name="Lao H.I."/>
            <person name="Lewis J."/>
            <person name="Lewis S."/>
            <person name="Lin S.-P."/>
            <person name="Loh P."/>
            <person name="Malaj E."/>
            <person name="Nguyen T."/>
            <person name="Pan H."/>
            <person name="Phan S."/>
            <person name="Qi S."/>
            <person name="Qian Y."/>
            <person name="Ray L."/>
            <person name="Ren Q."/>
            <person name="Shaull S."/>
            <person name="Sloan D."/>
            <person name="Song L."/>
            <person name="Wang Q."/>
            <person name="Wang Y."/>
            <person name="Wang Z."/>
            <person name="White J."/>
            <person name="Willingham D."/>
            <person name="Wu H."/>
            <person name="Yao Z."/>
            <person name="Zhan M."/>
            <person name="Zhang G."/>
            <person name="Chissoe S."/>
            <person name="Murray J."/>
            <person name="Miller N."/>
            <person name="Minx P."/>
            <person name="Fulton R."/>
            <person name="Johnson D."/>
            <person name="Bemis G."/>
            <person name="Bentley D."/>
            <person name="Bradshaw H."/>
            <person name="Bourne S."/>
            <person name="Cordes M."/>
            <person name="Du Z."/>
            <person name="Fulton L."/>
            <person name="Goela D."/>
            <person name="Graves T."/>
            <person name="Hawkins J."/>
            <person name="Hinds K."/>
            <person name="Kemp K."/>
            <person name="Latreille P."/>
            <person name="Layman D."/>
            <person name="Ozersky P."/>
            <person name="Rohlfing T."/>
            <person name="Scheet P."/>
            <person name="Walker C."/>
            <person name="Wamsley A."/>
            <person name="Wohldmann P."/>
            <person name="Pepin K."/>
            <person name="Nelson J."/>
            <person name="Korf I."/>
            <person name="Bedell J.A."/>
            <person name="Hillier L.W."/>
            <person name="Mardis E."/>
            <person name="Waterston R."/>
            <person name="Wilson R."/>
            <person name="Emanuel B.S."/>
            <person name="Shaikh T."/>
            <person name="Kurahashi H."/>
            <person name="Saitta S."/>
            <person name="Budarf M.L."/>
            <person name="McDermid H.E."/>
            <person name="Johnson A."/>
            <person name="Wong A.C.C."/>
            <person name="Morrow B.E."/>
            <person name="Edelmann L."/>
            <person name="Kim U.J."/>
            <person name="Shizuya H."/>
            <person name="Simon M.I."/>
            <person name="Dumanski J.P."/>
            <person name="Peyrard M."/>
            <person name="Kedra D."/>
            <person name="Seroussi E."/>
            <person name="Fransson I."/>
            <person name="Tapia I."/>
            <person name="Bruder C.E."/>
            <person name="O'Brien K.P."/>
            <person name="Wilkinson P."/>
            <person name="Bodenteich A."/>
            <person name="Hartman K."/>
            <person name="Hu X."/>
            <person name="Khan A.S."/>
            <person name="Lane L."/>
            <person name="Tilahun Y."/>
            <person name="Wright H."/>
        </authorList>
    </citation>
    <scope>NUCLEOTIDE SEQUENCE [LARGE SCALE GENOMIC DNA] (IMGT ALLELE IGLV3-1*01)</scope>
</reference>
<reference key="2">
    <citation type="journal article" date="1968" name="Biochem. J.">
        <title>Immunoglobulin lambda-chains. The complete amino acid sequence of a Bence-Jones protein.</title>
        <authorList>
            <person name="Milstein C."/>
            <person name="Clegg J.B."/>
            <person name="Jarvis J.M."/>
        </authorList>
    </citation>
    <scope>PROTEIN SEQUENCE OF 21-115</scope>
</reference>
<reference key="3">
    <citation type="journal article" date="1974" name="Hoppe-Seyler's Z. Physiol. Chem.">
        <title>Pattern of antibody structure, the primary structure of monoclonal immunoglobulin L-chain of the lambda-type, subgroup IV (Bence-Jones protein Bau.).</title>
        <authorList>
            <person name="Baczko K."/>
            <person name="Braun D."/>
            <person name="Hilschmann N."/>
        </authorList>
    </citation>
    <scope>PROTEIN SEQUENCE OF 21-115</scope>
</reference>
<reference key="4">
    <citation type="journal article" date="1986" name="Biochem. J.">
        <title>Structural studies of a carbohydrate-containing immunoglobulin-lambda-light-chain amyloid-fibril protein (AL) of variable subgroup III.</title>
        <authorList>
            <person name="Holm E."/>
            <person name="Sletten K."/>
            <person name="Husby G."/>
        </authorList>
    </citation>
    <scope>PROTEIN SEQUENCE OF 21-115</scope>
</reference>
<reference key="5">
    <citation type="journal article" date="2001" name="Exp. Clin. Immunogenet.">
        <title>Nomenclature of the human immunoglobulin lambda (IGL) genes.</title>
        <authorList>
            <person name="Lefranc M.P."/>
        </authorList>
    </citation>
    <scope>NOMENCLATURE</scope>
</reference>
<reference key="6">
    <citation type="book" date="2001" name="The Immunoglobulin FactsBook.">
        <title>The Immunoglobulin FactsBook.</title>
        <editorList>
            <person name="Lefranc M.P."/>
            <person name="Lefranc G."/>
        </editorList>
        <authorList>
            <person name="Lefranc M.P."/>
            <person name="Lefranc G."/>
        </authorList>
    </citation>
    <scope>NOMENCLATURE</scope>
</reference>
<reference key="7">
    <citation type="journal article" date="2007" name="Annu. Rev. Genet.">
        <title>Immunoglobulin somatic hypermutation.</title>
        <authorList>
            <person name="Teng G."/>
            <person name="Papavasiliou F.N."/>
        </authorList>
    </citation>
    <scope>REVIEW ON SOMATIC HYPERMUTATION</scope>
</reference>
<reference key="8">
    <citation type="journal article" date="2010" name="J. Allergy Clin. Immunol.">
        <title>Structure and function of immunoglobulins.</title>
        <authorList>
            <person name="Schroeder H.W. Jr."/>
            <person name="Cavacini L."/>
        </authorList>
    </citation>
    <scope>REVIEW ON IMMUNOGLOBULINS</scope>
</reference>
<reference key="9">
    <citation type="journal article" date="2012" name="Nat. Rev. Immunol.">
        <title>Molecular programming of B cell memory.</title>
        <authorList>
            <person name="McHeyzer-Williams M."/>
            <person name="Okitsu S."/>
            <person name="Wang N."/>
            <person name="McHeyzer-Williams L."/>
        </authorList>
    </citation>
    <scope>REVIEW ON FUNCTION</scope>
</reference>
<reference key="10">
    <citation type="journal article" date="2014" name="Front. Immunol.">
        <title>Immunoglobulin and T Cell Receptor Genes: IMGT((R)) and the Birth and Rise of Immunoinformatics.</title>
        <authorList>
            <person name="Lefranc M.P."/>
        </authorList>
    </citation>
    <scope>NOMENCLATURE</scope>
</reference>
<sequence length="115" mass="12296">MAWIPLFLGVLAYCTGSVASYELTQPPSVSVSPGQTASITCSGDKLGDKYACWYQQKPGQSPVLVIYQDSKRPSGIPERFSGSNSGNTATLTISGTQAMDEADYYCQAWDSSTAH</sequence>
<evidence type="ECO:0000250" key="1">
    <source>
        <dbReference type="UniProtKB" id="P01721"/>
    </source>
</evidence>
<evidence type="ECO:0000255" key="2">
    <source>
        <dbReference type="PROSITE-ProRule" id="PRU00114"/>
    </source>
</evidence>
<evidence type="ECO:0000269" key="3">
    <source>
    </source>
</evidence>
<evidence type="ECO:0000269" key="4">
    <source>
    </source>
</evidence>
<evidence type="ECO:0000269" key="5">
    <source>
    </source>
</evidence>
<evidence type="ECO:0000303" key="6">
    <source>
    </source>
</evidence>
<evidence type="ECO:0000303" key="7">
    <source>
    </source>
</evidence>
<evidence type="ECO:0000303" key="8">
    <source>
    </source>
</evidence>
<evidence type="ECO:0000303" key="9">
    <source>
    </source>
</evidence>
<evidence type="ECO:0000303" key="10">
    <source>
    </source>
</evidence>
<evidence type="ECO:0000303" key="11">
    <source ref="6"/>
</evidence>
<evidence type="ECO:0000305" key="12"/>
<evidence type="ECO:0000305" key="13">
    <source>
    </source>
</evidence>
<evidence type="ECO:0000305" key="14">
    <source>
    </source>
</evidence>
<evidence type="ECO:0000305" key="15">
    <source>
    </source>
</evidence>
<protein>
    <recommendedName>
        <fullName evidence="6 11">Immunoglobulin lambda variable 3-1</fullName>
    </recommendedName>
    <alternativeName>
        <fullName evidence="14">Ig lambda chain V-IV region Bau</fullName>
    </alternativeName>
    <alternativeName>
        <fullName evidence="13">Ig lambda chain V-IV region MOL</fullName>
    </alternativeName>
    <alternativeName>
        <fullName evidence="15">Ig lambda chain V-IV region X</fullName>
    </alternativeName>
</protein>
<organism>
    <name type="scientific">Homo sapiens</name>
    <name type="common">Human</name>
    <dbReference type="NCBI Taxonomy" id="9606"/>
    <lineage>
        <taxon>Eukaryota</taxon>
        <taxon>Metazoa</taxon>
        <taxon>Chordata</taxon>
        <taxon>Craniata</taxon>
        <taxon>Vertebrata</taxon>
        <taxon>Euteleostomi</taxon>
        <taxon>Mammalia</taxon>
        <taxon>Eutheria</taxon>
        <taxon>Euarchontoglires</taxon>
        <taxon>Primates</taxon>
        <taxon>Haplorrhini</taxon>
        <taxon>Catarrhini</taxon>
        <taxon>Hominidae</taxon>
        <taxon>Homo</taxon>
    </lineage>
</organism>
<dbReference type="EMBL" id="AC245028">
    <property type="status" value="NOT_ANNOTATED_CDS"/>
    <property type="molecule type" value="Genomic_DNA"/>
</dbReference>
<dbReference type="PIR" id="A01981">
    <property type="entry name" value="L4HUBU"/>
</dbReference>
<dbReference type="PIR" id="A01982">
    <property type="entry name" value="L4HUX"/>
</dbReference>
<dbReference type="PIR" id="A26019">
    <property type="entry name" value="L4HUML"/>
</dbReference>
<dbReference type="EMDB" id="EMD-18808"/>
<dbReference type="EMDB" id="EMD-23489"/>
<dbReference type="EMDB" id="EMD-25268"/>
<dbReference type="EMDB" id="EMD-25269"/>
<dbReference type="EMDB" id="EMD-26583"/>
<dbReference type="EMDB" id="EMD-27990"/>
<dbReference type="EMDB" id="EMD-29052"/>
<dbReference type="EMDB" id="EMD-29054"/>
<dbReference type="EMDB" id="EMD-31635"/>
<dbReference type="EMDB" id="EMD-31636"/>
<dbReference type="EMDB" id="EMD-43658"/>
<dbReference type="EMDB" id="EMD-43659"/>
<dbReference type="EMDB" id="EMD-9110"/>
<dbReference type="SMR" id="P01715"/>
<dbReference type="FunCoup" id="P01715">
    <property type="interactions" value="404"/>
</dbReference>
<dbReference type="IMGT_GENE-DB" id="IGLV3-1"/>
<dbReference type="BioMuta" id="IGLV3-1"/>
<dbReference type="DMDM" id="126566"/>
<dbReference type="MassIVE" id="P01715"/>
<dbReference type="Ensembl" id="ENST00000390319.2">
    <property type="protein sequence ID" value="ENSP00000374854.2"/>
    <property type="gene ID" value="ENSG00000211673.2"/>
</dbReference>
<dbReference type="AGR" id="HGNC:5896"/>
<dbReference type="GeneCards" id="IGLV3-1"/>
<dbReference type="HGNC" id="HGNC:5896">
    <property type="gene designation" value="IGLV3-1"/>
</dbReference>
<dbReference type="HPA" id="ENSG00000211673">
    <property type="expression patterns" value="Tissue enhanced (intestine, lymphoid tissue, stomach)"/>
</dbReference>
<dbReference type="neXtProt" id="NX_P01715"/>
<dbReference type="OpenTargets" id="ENSG00000211673"/>
<dbReference type="VEuPathDB" id="HostDB:ENSG00000211673"/>
<dbReference type="GeneTree" id="ENSGT00940000153120"/>
<dbReference type="InParanoid" id="P01715"/>
<dbReference type="OMA" id="GAFHVEW"/>
<dbReference type="OrthoDB" id="9531984at2759"/>
<dbReference type="PAN-GO" id="P01715">
    <property type="GO annotations" value="3 GO annotations based on evolutionary models"/>
</dbReference>
<dbReference type="PhylomeDB" id="P01715"/>
<dbReference type="PathwayCommons" id="P01715"/>
<dbReference type="Reactome" id="R-HSA-166663">
    <property type="pathway name" value="Initial triggering of complement"/>
</dbReference>
<dbReference type="Reactome" id="R-HSA-173623">
    <property type="pathway name" value="Classical antibody-mediated complement activation"/>
</dbReference>
<dbReference type="Reactome" id="R-HSA-198933">
    <property type="pathway name" value="Immunoregulatory interactions between a Lymphoid and a non-Lymphoid cell"/>
</dbReference>
<dbReference type="Reactome" id="R-HSA-202733">
    <property type="pathway name" value="Cell surface interactions at the vascular wall"/>
</dbReference>
<dbReference type="Reactome" id="R-HSA-2029481">
    <property type="pathway name" value="FCGR activation"/>
</dbReference>
<dbReference type="Reactome" id="R-HSA-2029482">
    <property type="pathway name" value="Regulation of actin dynamics for phagocytic cup formation"/>
</dbReference>
<dbReference type="Reactome" id="R-HSA-2029485">
    <property type="pathway name" value="Role of phospholipids in phagocytosis"/>
</dbReference>
<dbReference type="Reactome" id="R-HSA-2168880">
    <property type="pathway name" value="Scavenging of heme from plasma"/>
</dbReference>
<dbReference type="Reactome" id="R-HSA-2454202">
    <property type="pathway name" value="Fc epsilon receptor (FCERI) signaling"/>
</dbReference>
<dbReference type="Reactome" id="R-HSA-2730905">
    <property type="pathway name" value="Role of LAT2/NTAL/LAB on calcium mobilization"/>
</dbReference>
<dbReference type="Reactome" id="R-HSA-2871796">
    <property type="pathway name" value="FCERI mediated MAPK activation"/>
</dbReference>
<dbReference type="Reactome" id="R-HSA-2871809">
    <property type="pathway name" value="FCERI mediated Ca+2 mobilization"/>
</dbReference>
<dbReference type="Reactome" id="R-HSA-2871837">
    <property type="pathway name" value="FCERI mediated NF-kB activation"/>
</dbReference>
<dbReference type="Reactome" id="R-HSA-5690714">
    <property type="pathway name" value="CD22 mediated BCR regulation"/>
</dbReference>
<dbReference type="Reactome" id="R-HSA-9664323">
    <property type="pathway name" value="FCGR3A-mediated IL10 synthesis"/>
</dbReference>
<dbReference type="Reactome" id="R-HSA-9664422">
    <property type="pathway name" value="FCGR3A-mediated phagocytosis"/>
</dbReference>
<dbReference type="Reactome" id="R-HSA-9679191">
    <property type="pathway name" value="Potential therapeutics for SARS"/>
</dbReference>
<dbReference type="Reactome" id="R-HSA-977606">
    <property type="pathway name" value="Regulation of Complement cascade"/>
</dbReference>
<dbReference type="Reactome" id="R-HSA-983695">
    <property type="pathway name" value="Antigen activates B Cell Receptor (BCR) leading to generation of second messengers"/>
</dbReference>
<dbReference type="ChiTaRS" id="IGLV3-1">
    <property type="organism name" value="human"/>
</dbReference>
<dbReference type="Pharos" id="P01715">
    <property type="development level" value="Tdark"/>
</dbReference>
<dbReference type="PRO" id="PR:P01715"/>
<dbReference type="Proteomes" id="UP000005640">
    <property type="component" value="Chromosome 22"/>
</dbReference>
<dbReference type="RNAct" id="P01715">
    <property type="molecule type" value="protein"/>
</dbReference>
<dbReference type="Bgee" id="ENSG00000211673">
    <property type="expression patterns" value="Expressed in lymph node and 89 other cell types or tissues"/>
</dbReference>
<dbReference type="GO" id="GO:0005576">
    <property type="term" value="C:extracellular region"/>
    <property type="evidence" value="ECO:0000304"/>
    <property type="project" value="Reactome"/>
</dbReference>
<dbReference type="GO" id="GO:0019814">
    <property type="term" value="C:immunoglobulin complex"/>
    <property type="evidence" value="ECO:0000318"/>
    <property type="project" value="GO_Central"/>
</dbReference>
<dbReference type="GO" id="GO:0005886">
    <property type="term" value="C:plasma membrane"/>
    <property type="evidence" value="ECO:0000304"/>
    <property type="project" value="Reactome"/>
</dbReference>
<dbReference type="GO" id="GO:0003823">
    <property type="term" value="F:antigen binding"/>
    <property type="evidence" value="ECO:0000303"/>
    <property type="project" value="UniProtKB"/>
</dbReference>
<dbReference type="GO" id="GO:0002250">
    <property type="term" value="P:adaptive immune response"/>
    <property type="evidence" value="ECO:0007669"/>
    <property type="project" value="UniProtKB-KW"/>
</dbReference>
<dbReference type="GO" id="GO:0006955">
    <property type="term" value="P:immune response"/>
    <property type="evidence" value="ECO:0000318"/>
    <property type="project" value="GO_Central"/>
</dbReference>
<dbReference type="FunFam" id="2.60.40.10:FF:000620">
    <property type="entry name" value="Immunoglobulin lambda locus"/>
    <property type="match status" value="1"/>
</dbReference>
<dbReference type="Gene3D" id="2.60.40.10">
    <property type="entry name" value="Immunoglobulins"/>
    <property type="match status" value="1"/>
</dbReference>
<dbReference type="InterPro" id="IPR007110">
    <property type="entry name" value="Ig-like_dom"/>
</dbReference>
<dbReference type="InterPro" id="IPR036179">
    <property type="entry name" value="Ig-like_dom_sf"/>
</dbReference>
<dbReference type="InterPro" id="IPR013783">
    <property type="entry name" value="Ig-like_fold"/>
</dbReference>
<dbReference type="InterPro" id="IPR003599">
    <property type="entry name" value="Ig_sub"/>
</dbReference>
<dbReference type="InterPro" id="IPR013106">
    <property type="entry name" value="Ig_V-set"/>
</dbReference>
<dbReference type="InterPro" id="IPR050150">
    <property type="entry name" value="IgV_Light_Chain"/>
</dbReference>
<dbReference type="PANTHER" id="PTHR23267">
    <property type="entry name" value="IMMUNOGLOBULIN LIGHT CHAIN"/>
    <property type="match status" value="1"/>
</dbReference>
<dbReference type="Pfam" id="PF07686">
    <property type="entry name" value="V-set"/>
    <property type="match status" value="1"/>
</dbReference>
<dbReference type="SMART" id="SM00409">
    <property type="entry name" value="IG"/>
    <property type="match status" value="1"/>
</dbReference>
<dbReference type="SMART" id="SM00406">
    <property type="entry name" value="IGv"/>
    <property type="match status" value="1"/>
</dbReference>
<dbReference type="SUPFAM" id="SSF48726">
    <property type="entry name" value="Immunoglobulin"/>
    <property type="match status" value="1"/>
</dbReference>
<dbReference type="PROSITE" id="PS50835">
    <property type="entry name" value="IG_LIKE"/>
    <property type="match status" value="1"/>
</dbReference>
<name>LV301_HUMAN</name>
<gene>
    <name evidence="6 11" type="primary">IGLV3-1</name>
</gene>
<comment type="function">
    <text evidence="7 8 9 10">V region of the variable domain of immunoglobulin light chains that participates in the antigen recognition (PubMed:24600447). Immunoglobulins, also known as antibodies, are membrane-bound or secreted glycoproteins produced by B lymphocytes. In the recognition phase of humoral immunity, the membrane-bound immunoglobulins serve as receptors which, upon binding of a specific antigen, trigger the clonal expansion and differentiation of B lymphocytes into immunoglobulins-secreting plasma cells. Secreted immunoglobulins mediate the effector phase of humoral immunity, which results in the elimination of bound antigens (PubMed:20176268, PubMed:22158414). The antigen binding site is formed by the variable domain of one heavy chain, together with that of its associated light chain. Thus, each immunoglobulin has two antigen binding sites with remarkable affinity for a particular antigen. The variable domains are assembled by a process called V-(D)-J rearrangement and can then be subjected to somatic hypermutations which, after exposure to antigen and selection, allow affinity maturation for a particular antigen (PubMed:17576170, PubMed:20176268).</text>
</comment>
<comment type="subunit">
    <text evidence="8">Immunoglobulins are composed of two identical heavy chains and two identical light chains; disulfide-linked.</text>
</comment>
<comment type="subcellular location">
    <subcellularLocation>
        <location evidence="8 9">Secreted</location>
    </subcellularLocation>
    <subcellularLocation>
        <location evidence="8 9">Cell membrane</location>
    </subcellularLocation>
</comment>
<comment type="polymorphism">
    <text>There are several alleles. The sequence shown is that of IMGT allele IGLV3-1*01.</text>
</comment>
<comment type="caution">
    <text evidence="12">For an example of a full-length immunoglobulin lambda light chain see AC P0DOX8.</text>
</comment>
<accession>P01715</accession>
<accession>A0A075B6K7</accession>
<accession>P01716</accession>
<accession>P06889</accession>
<feature type="signal peptide" evidence="3 4 5">
    <location>
        <begin position="1"/>
        <end position="20"/>
    </location>
</feature>
<feature type="chain" id="PRO_0000059844" description="Immunoglobulin lambda variable 3-1" evidence="3 4 5">
    <location>
        <begin position="21"/>
        <end position="115"/>
    </location>
</feature>
<feature type="domain" description="Ig-like" evidence="2">
    <location>
        <begin position="21"/>
        <end position="115" status="greater than"/>
    </location>
</feature>
<feature type="region of interest" description="Framework-1" evidence="1">
    <location>
        <begin position="20"/>
        <end position="41"/>
    </location>
</feature>
<feature type="region of interest" description="Complementarity-determining-1" evidence="1">
    <location>
        <begin position="42"/>
        <end position="50"/>
    </location>
</feature>
<feature type="region of interest" description="Framework-2" evidence="1">
    <location>
        <begin position="51"/>
        <end position="67"/>
    </location>
</feature>
<feature type="region of interest" description="Complementarity-determining-2" evidence="1">
    <location>
        <begin position="68"/>
        <end position="70"/>
    </location>
</feature>
<feature type="region of interest" description="Framework-3" evidence="1">
    <location>
        <begin position="71"/>
        <end position="106"/>
    </location>
</feature>
<feature type="region of interest" description="Complementarity-determining-3" evidence="1">
    <location>
        <begin position="107"/>
        <end position="115" status="greater than"/>
    </location>
</feature>
<feature type="disulfide bond" evidence="2">
    <location>
        <begin position="41"/>
        <end position="106"/>
    </location>
</feature>
<feature type="sequence conflict" description="In Ref. 2; AA sequence." evidence="12" ref="2">
    <original>E</original>
    <variation>D</variation>
    <location>
        <position position="22"/>
    </location>
</feature>
<feature type="sequence conflict" description="In Ref. 3; AA sequence." evidence="12" ref="3">
    <original>E</original>
    <variation>G</variation>
    <location>
        <position position="22"/>
    </location>
</feature>
<feature type="sequence conflict" description="In Ref. 3; AA sequence." evidence="12" ref="3">
    <original>V</original>
    <variation>L</variation>
    <location>
        <position position="29"/>
    </location>
</feature>
<feature type="sequence conflict" description="In Ref. 4; AA sequence." evidence="12" ref="4">
    <original>SIT</original>
    <variation>TIS</variation>
    <location>
        <begin position="38"/>
        <end position="40"/>
    </location>
</feature>
<feature type="sequence conflict" description="In Ref. 4; AA sequence." evidence="12" ref="4">
    <original>DKYAC</original>
    <variation>ESYYD</variation>
    <location>
        <begin position="48"/>
        <end position="52"/>
    </location>
</feature>
<feature type="sequence conflict" description="In Ref. 3; AA sequence." evidence="12" ref="3">
    <original>DKYA</original>
    <variation>EQYV</variation>
    <location>
        <begin position="48"/>
        <end position="51"/>
    </location>
</feature>
<feature type="sequence conflict" description="In Ref. 2; AA sequence." evidence="12" ref="2">
    <original>YA</original>
    <variation>DV</variation>
    <location>
        <begin position="50"/>
        <end position="51"/>
    </location>
</feature>
<feature type="sequence conflict" description="In Ref. 2; AA sequence." evidence="12" ref="2">
    <original>K</original>
    <variation>R</variation>
    <location>
        <position position="57"/>
    </location>
</feature>
<feature type="sequence conflict" description="In Ref. 4; AA sequence." evidence="12" ref="4">
    <original>K</original>
    <variation>S</variation>
    <location>
        <position position="57"/>
    </location>
</feature>
<feature type="sequence conflict" description="In Ref. 4; AA sequence." evidence="12" ref="4">
    <original>V</original>
    <variation>L</variation>
    <location>
        <position position="63"/>
    </location>
</feature>
<feature type="sequence conflict" description="In Ref. 4; AA sequence." evidence="12" ref="4">
    <original>QDS</original>
    <variation>EGD</variation>
    <location>
        <begin position="68"/>
        <end position="70"/>
    </location>
</feature>
<feature type="sequence conflict" description="In Ref. 3; AA sequence." evidence="12" ref="3">
    <original>Q</original>
    <variation>H</variation>
    <location>
        <position position="68"/>
    </location>
</feature>
<feature type="sequence conflict" description="In Ref. 2; AA sequence." evidence="12" ref="2">
    <original>SKRP</original>
    <variation>NQRS</variation>
    <location>
        <begin position="70"/>
        <end position="73"/>
    </location>
</feature>
<feature type="sequence conflict" description="In Ref. 3; AA sequence." evidence="12" ref="3">
    <original>N</original>
    <variation>T</variation>
    <location>
        <position position="87"/>
    </location>
</feature>
<feature type="sequence conflict" description="In Ref. 4; AA sequence." evidence="12" ref="4">
    <original>QA</original>
    <variation>ES</variation>
    <location>
        <begin position="97"/>
        <end position="98"/>
    </location>
</feature>
<feature type="sequence conflict" description="In Ref. 4; AA sequence." evidence="12" ref="4">
    <original>D</original>
    <variation>N</variation>
    <location>
        <position position="110"/>
    </location>
</feature>
<feature type="sequence conflict" description="In Ref. 2; AA sequence." evidence="12" ref="2">
    <original>STAH</original>
    <variation>MSVV</variation>
    <location>
        <begin position="112"/>
        <end position="115"/>
    </location>
</feature>
<feature type="sequence conflict" description="In Ref. 3; AA sequence." evidence="12" ref="3">
    <original>STAH</original>
    <variation>YTVI</variation>
    <location>
        <begin position="112"/>
        <end position="115"/>
    </location>
</feature>
<feature type="sequence conflict" description="In Ref. 4; AA sequence." evidence="12" ref="4">
    <original>TAH</original>
    <variation>SVL</variation>
    <location>
        <begin position="113"/>
        <end position="115"/>
    </location>
</feature>
<feature type="non-terminal residue">
    <location>
        <position position="115"/>
    </location>
</feature>